<accession>P0DMR6</accession>
<accession>Q717B3</accession>
<accession>Q71G58</accession>
<accession>Q8BZV7</accession>
<accession>Q8VI39</accession>
<feature type="chain" id="PRO_0000431621" description="TD and POZ domain-containing protein 1-like">
    <location>
        <begin position="1"/>
        <end position="365"/>
    </location>
</feature>
<feature type="domain" description="MATH" evidence="2">
    <location>
        <begin position="19"/>
        <end position="149"/>
    </location>
</feature>
<feature type="domain" description="BTB" evidence="1">
    <location>
        <begin position="188"/>
        <end position="255"/>
    </location>
</feature>
<proteinExistence type="evidence at transcript level"/>
<reference key="1">
    <citation type="journal article" date="2005" name="Science">
        <title>The transcriptional landscape of the mammalian genome.</title>
        <authorList>
            <person name="Carninci P."/>
            <person name="Kasukawa T."/>
            <person name="Katayama S."/>
            <person name="Gough J."/>
            <person name="Frith M.C."/>
            <person name="Maeda N."/>
            <person name="Oyama R."/>
            <person name="Ravasi T."/>
            <person name="Lenhard B."/>
            <person name="Wells C."/>
            <person name="Kodzius R."/>
            <person name="Shimokawa K."/>
            <person name="Bajic V.B."/>
            <person name="Brenner S.E."/>
            <person name="Batalov S."/>
            <person name="Forrest A.R."/>
            <person name="Zavolan M."/>
            <person name="Davis M.J."/>
            <person name="Wilming L.G."/>
            <person name="Aidinis V."/>
            <person name="Allen J.E."/>
            <person name="Ambesi-Impiombato A."/>
            <person name="Apweiler R."/>
            <person name="Aturaliya R.N."/>
            <person name="Bailey T.L."/>
            <person name="Bansal M."/>
            <person name="Baxter L."/>
            <person name="Beisel K.W."/>
            <person name="Bersano T."/>
            <person name="Bono H."/>
            <person name="Chalk A.M."/>
            <person name="Chiu K.P."/>
            <person name="Choudhary V."/>
            <person name="Christoffels A."/>
            <person name="Clutterbuck D.R."/>
            <person name="Crowe M.L."/>
            <person name="Dalla E."/>
            <person name="Dalrymple B.P."/>
            <person name="de Bono B."/>
            <person name="Della Gatta G."/>
            <person name="di Bernardo D."/>
            <person name="Down T."/>
            <person name="Engstrom P."/>
            <person name="Fagiolini M."/>
            <person name="Faulkner G."/>
            <person name="Fletcher C.F."/>
            <person name="Fukushima T."/>
            <person name="Furuno M."/>
            <person name="Futaki S."/>
            <person name="Gariboldi M."/>
            <person name="Georgii-Hemming P."/>
            <person name="Gingeras T.R."/>
            <person name="Gojobori T."/>
            <person name="Green R.E."/>
            <person name="Gustincich S."/>
            <person name="Harbers M."/>
            <person name="Hayashi Y."/>
            <person name="Hensch T.K."/>
            <person name="Hirokawa N."/>
            <person name="Hill D."/>
            <person name="Huminiecki L."/>
            <person name="Iacono M."/>
            <person name="Ikeo K."/>
            <person name="Iwama A."/>
            <person name="Ishikawa T."/>
            <person name="Jakt M."/>
            <person name="Kanapin A."/>
            <person name="Katoh M."/>
            <person name="Kawasawa Y."/>
            <person name="Kelso J."/>
            <person name="Kitamura H."/>
            <person name="Kitano H."/>
            <person name="Kollias G."/>
            <person name="Krishnan S.P."/>
            <person name="Kruger A."/>
            <person name="Kummerfeld S.K."/>
            <person name="Kurochkin I.V."/>
            <person name="Lareau L.F."/>
            <person name="Lazarevic D."/>
            <person name="Lipovich L."/>
            <person name="Liu J."/>
            <person name="Liuni S."/>
            <person name="McWilliam S."/>
            <person name="Madan Babu M."/>
            <person name="Madera M."/>
            <person name="Marchionni L."/>
            <person name="Matsuda H."/>
            <person name="Matsuzawa S."/>
            <person name="Miki H."/>
            <person name="Mignone F."/>
            <person name="Miyake S."/>
            <person name="Morris K."/>
            <person name="Mottagui-Tabar S."/>
            <person name="Mulder N."/>
            <person name="Nakano N."/>
            <person name="Nakauchi H."/>
            <person name="Ng P."/>
            <person name="Nilsson R."/>
            <person name="Nishiguchi S."/>
            <person name="Nishikawa S."/>
            <person name="Nori F."/>
            <person name="Ohara O."/>
            <person name="Okazaki Y."/>
            <person name="Orlando V."/>
            <person name="Pang K.C."/>
            <person name="Pavan W.J."/>
            <person name="Pavesi G."/>
            <person name="Pesole G."/>
            <person name="Petrovsky N."/>
            <person name="Piazza S."/>
            <person name="Reed J."/>
            <person name="Reid J.F."/>
            <person name="Ring B.Z."/>
            <person name="Ringwald M."/>
            <person name="Rost B."/>
            <person name="Ruan Y."/>
            <person name="Salzberg S.L."/>
            <person name="Sandelin A."/>
            <person name="Schneider C."/>
            <person name="Schoenbach C."/>
            <person name="Sekiguchi K."/>
            <person name="Semple C.A."/>
            <person name="Seno S."/>
            <person name="Sessa L."/>
            <person name="Sheng Y."/>
            <person name="Shibata Y."/>
            <person name="Shimada H."/>
            <person name="Shimada K."/>
            <person name="Silva D."/>
            <person name="Sinclair B."/>
            <person name="Sperling S."/>
            <person name="Stupka E."/>
            <person name="Sugiura K."/>
            <person name="Sultana R."/>
            <person name="Takenaka Y."/>
            <person name="Taki K."/>
            <person name="Tammoja K."/>
            <person name="Tan S.L."/>
            <person name="Tang S."/>
            <person name="Taylor M.S."/>
            <person name="Tegner J."/>
            <person name="Teichmann S.A."/>
            <person name="Ueda H.R."/>
            <person name="van Nimwegen E."/>
            <person name="Verardo R."/>
            <person name="Wei C.L."/>
            <person name="Yagi K."/>
            <person name="Yamanishi H."/>
            <person name="Zabarovsky E."/>
            <person name="Zhu S."/>
            <person name="Zimmer A."/>
            <person name="Hide W."/>
            <person name="Bult C."/>
            <person name="Grimmond S.M."/>
            <person name="Teasdale R.D."/>
            <person name="Liu E.T."/>
            <person name="Brusic V."/>
            <person name="Quackenbush J."/>
            <person name="Wahlestedt C."/>
            <person name="Mattick J.S."/>
            <person name="Hume D.A."/>
            <person name="Kai C."/>
            <person name="Sasaki D."/>
            <person name="Tomaru Y."/>
            <person name="Fukuda S."/>
            <person name="Kanamori-Katayama M."/>
            <person name="Suzuki M."/>
            <person name="Aoki J."/>
            <person name="Arakawa T."/>
            <person name="Iida J."/>
            <person name="Imamura K."/>
            <person name="Itoh M."/>
            <person name="Kato T."/>
            <person name="Kawaji H."/>
            <person name="Kawagashira N."/>
            <person name="Kawashima T."/>
            <person name="Kojima M."/>
            <person name="Kondo S."/>
            <person name="Konno H."/>
            <person name="Nakano K."/>
            <person name="Ninomiya N."/>
            <person name="Nishio T."/>
            <person name="Okada M."/>
            <person name="Plessy C."/>
            <person name="Shibata K."/>
            <person name="Shiraki T."/>
            <person name="Suzuki S."/>
            <person name="Tagami M."/>
            <person name="Waki K."/>
            <person name="Watahiki A."/>
            <person name="Okamura-Oho Y."/>
            <person name="Suzuki H."/>
            <person name="Kawai J."/>
            <person name="Hayashizaki Y."/>
        </authorList>
    </citation>
    <scope>NUCLEOTIDE SEQUENCE [LARGE SCALE MRNA]</scope>
    <source>
        <strain>C57BL/6J</strain>
        <tissue>Colon</tissue>
    </source>
</reference>
<sequence>MSEDMEFENWGSTQSSVEKFCYKWTISNFSFCMGGIQRRITSPVFSSEENKEVAWCLRVYPKGADKESKDYLSVYLVLLSHLQSPVWAKFKFWIINSQGEKYQKTKSPIVECFLTYEQSGFKKFLPRDLLLSHRNCLLPEDQLTICCKVTILGRKYNMPSQNITPAIKDPRHLLTDDLGELWENSLFTDCCLLVAGHEFRAHKAILAARSPVFRAMFEHEMKESLKTPIKIHNLNPQVFKEMMSFIYTGKAPYLHSHSMACDVLPAADKYGLVSLKVLCEDAFCRNLSVKNATHTLILADLHSTEKLKTQALDFIAYYASEVCETSEWKSMVESHPHLVAEAFQSLASAQCSFLEPKVISGSNQL</sequence>
<dbReference type="EMBL" id="AK033449">
    <property type="protein sequence ID" value="BAC28295.1"/>
    <property type="molecule type" value="mRNA"/>
</dbReference>
<dbReference type="CCDS" id="CCDS57232.1"/>
<dbReference type="RefSeq" id="NP_001157202.1">
    <property type="nucleotide sequence ID" value="NM_001163730.2"/>
</dbReference>
<dbReference type="SMR" id="P0DMR6"/>
<dbReference type="FunCoup" id="P0DMR6">
    <property type="interactions" value="93"/>
</dbReference>
<dbReference type="STRING" id="10090.ENSMUSP00000138015"/>
<dbReference type="PaxDb" id="10090-ENSMUSP00000136341"/>
<dbReference type="Ensembl" id="ENSMUST00000178458.2">
    <property type="protein sequence ID" value="ENSMUSP00000136564.2"/>
    <property type="gene ID" value="ENSMUSG00000094328.3"/>
</dbReference>
<dbReference type="Ensembl" id="ENSMUST00000180746.2">
    <property type="protein sequence ID" value="ENSMUSP00000138015.2"/>
    <property type="gene ID" value="ENSMUSG00000094328.3"/>
</dbReference>
<dbReference type="Ensembl" id="ENSMUST00000193529.2">
    <property type="protein sequence ID" value="ENSMUSP00000141802.2"/>
    <property type="gene ID" value="ENSMUSG00000095822.4"/>
</dbReference>
<dbReference type="GeneID" id="668359"/>
<dbReference type="KEGG" id="mmu:668359"/>
<dbReference type="UCSC" id="uc008qfq.1">
    <property type="organism name" value="mouse"/>
</dbReference>
<dbReference type="AGR" id="MGI:3702970"/>
<dbReference type="AGR" id="MGI:3704095"/>
<dbReference type="CTD" id="668359"/>
<dbReference type="MGI" id="MGI:3702970">
    <property type="gene designation" value="Gm9125"/>
</dbReference>
<dbReference type="VEuPathDB" id="HostDB:ENSMUSG00000094328"/>
<dbReference type="VEuPathDB" id="HostDB:ENSMUSG00000095822"/>
<dbReference type="eggNOG" id="KOG1987">
    <property type="taxonomic scope" value="Eukaryota"/>
</dbReference>
<dbReference type="GeneTree" id="ENSGT00940000154376"/>
<dbReference type="HOGENOM" id="CLU_004253_2_0_1"/>
<dbReference type="InParanoid" id="P0DMR6"/>
<dbReference type="OMA" id="FKVDGYA"/>
<dbReference type="OrthoDB" id="9620072at2759"/>
<dbReference type="PhylomeDB" id="P0DMR6"/>
<dbReference type="BioGRID-ORCS" id="668359">
    <property type="hits" value="2 hits in 34 CRISPR screens"/>
</dbReference>
<dbReference type="PRO" id="PR:P0DMR6"/>
<dbReference type="Proteomes" id="UP000000589">
    <property type="component" value="Chromosome 3"/>
</dbReference>
<dbReference type="RNAct" id="P0DMR6">
    <property type="molecule type" value="protein"/>
</dbReference>
<dbReference type="Bgee" id="ENSMUSG00000094328">
    <property type="expression patterns" value="Expressed in embryonic cell in embryo and 5 other cell types or tissues"/>
</dbReference>
<dbReference type="GO" id="GO:0030163">
    <property type="term" value="P:protein catabolic process"/>
    <property type="evidence" value="ECO:0007669"/>
    <property type="project" value="UniProtKB-ARBA"/>
</dbReference>
<dbReference type="CDD" id="cd18521">
    <property type="entry name" value="BACK_Tdpoz"/>
    <property type="match status" value="1"/>
</dbReference>
<dbReference type="CDD" id="cd18344">
    <property type="entry name" value="BTB_POZ_TDPOZ"/>
    <property type="match status" value="1"/>
</dbReference>
<dbReference type="FunFam" id="3.30.710.10:FF:000147">
    <property type="entry name" value="Predicted gene 4858"/>
    <property type="match status" value="1"/>
</dbReference>
<dbReference type="FunFam" id="2.60.210.10:FF:000003">
    <property type="entry name" value="Speckle-type POZ protein-like a"/>
    <property type="match status" value="1"/>
</dbReference>
<dbReference type="Gene3D" id="6.10.250.3030">
    <property type="match status" value="1"/>
</dbReference>
<dbReference type="Gene3D" id="6.20.250.50">
    <property type="match status" value="1"/>
</dbReference>
<dbReference type="Gene3D" id="2.60.210.10">
    <property type="entry name" value="Apoptosis, Tumor Necrosis Factor Receptor Associated Protein 2, Chain A"/>
    <property type="match status" value="1"/>
</dbReference>
<dbReference type="Gene3D" id="3.30.710.10">
    <property type="entry name" value="Potassium Channel Kv1.1, Chain A"/>
    <property type="match status" value="1"/>
</dbReference>
<dbReference type="InterPro" id="IPR000210">
    <property type="entry name" value="BTB/POZ_dom"/>
</dbReference>
<dbReference type="InterPro" id="IPR002083">
    <property type="entry name" value="MATH/TRAF_dom"/>
</dbReference>
<dbReference type="InterPro" id="IPR011333">
    <property type="entry name" value="SKP1/BTB/POZ_sf"/>
</dbReference>
<dbReference type="InterPro" id="IPR008974">
    <property type="entry name" value="TRAF-like"/>
</dbReference>
<dbReference type="PANTHER" id="PTHR24413">
    <property type="entry name" value="SPECKLE-TYPE POZ PROTEIN"/>
    <property type="match status" value="1"/>
</dbReference>
<dbReference type="Pfam" id="PF00651">
    <property type="entry name" value="BTB"/>
    <property type="match status" value="1"/>
</dbReference>
<dbReference type="Pfam" id="PF22486">
    <property type="entry name" value="MATH_2"/>
    <property type="match status" value="1"/>
</dbReference>
<dbReference type="SMART" id="SM00225">
    <property type="entry name" value="BTB"/>
    <property type="match status" value="1"/>
</dbReference>
<dbReference type="SMART" id="SM00061">
    <property type="entry name" value="MATH"/>
    <property type="match status" value="1"/>
</dbReference>
<dbReference type="SUPFAM" id="SSF54695">
    <property type="entry name" value="POZ domain"/>
    <property type="match status" value="1"/>
</dbReference>
<dbReference type="SUPFAM" id="SSF49599">
    <property type="entry name" value="TRAF domain-like"/>
    <property type="match status" value="1"/>
</dbReference>
<dbReference type="PROSITE" id="PS50097">
    <property type="entry name" value="BTB"/>
    <property type="match status" value="1"/>
</dbReference>
<dbReference type="PROSITE" id="PS50144">
    <property type="entry name" value="MATH"/>
    <property type="match status" value="1"/>
</dbReference>
<organism>
    <name type="scientific">Mus musculus</name>
    <name type="common">Mouse</name>
    <dbReference type="NCBI Taxonomy" id="10090"/>
    <lineage>
        <taxon>Eukaryota</taxon>
        <taxon>Metazoa</taxon>
        <taxon>Chordata</taxon>
        <taxon>Craniata</taxon>
        <taxon>Vertebrata</taxon>
        <taxon>Euteleostomi</taxon>
        <taxon>Mammalia</taxon>
        <taxon>Eutheria</taxon>
        <taxon>Euarchontoglires</taxon>
        <taxon>Glires</taxon>
        <taxon>Rodentia</taxon>
        <taxon>Myomorpha</taxon>
        <taxon>Muroidea</taxon>
        <taxon>Muridae</taxon>
        <taxon>Murinae</taxon>
        <taxon>Mus</taxon>
        <taxon>Mus</taxon>
    </lineage>
</organism>
<gene>
    <name evidence="4" type="primary">Gm9125</name>
</gene>
<comment type="similarity">
    <text evidence="3">Belongs to the Tdpoz family.</text>
</comment>
<name>TDP1L_MOUSE</name>
<keyword id="KW-1185">Reference proteome</keyword>
<evidence type="ECO:0000255" key="1">
    <source>
        <dbReference type="PROSITE-ProRule" id="PRU00037"/>
    </source>
</evidence>
<evidence type="ECO:0000255" key="2">
    <source>
        <dbReference type="PROSITE-ProRule" id="PRU00129"/>
    </source>
</evidence>
<evidence type="ECO:0000305" key="3"/>
<evidence type="ECO:0000312" key="4">
    <source>
        <dbReference type="MGI" id="MGI:3702970"/>
    </source>
</evidence>
<protein>
    <recommendedName>
        <fullName evidence="3">TD and POZ domain-containing protein 1-like</fullName>
    </recommendedName>
</protein>